<name>CARA_PSEPK</name>
<comment type="function">
    <text evidence="1">Small subunit of the glutamine-dependent carbamoyl phosphate synthetase (CPSase). CPSase catalyzes the formation of carbamoyl phosphate from the ammonia moiety of glutamine, carbonate, and phosphate donated by ATP, constituting the first step of 2 biosynthetic pathways, one leading to arginine and/or urea and the other to pyrimidine nucleotides. The small subunit (glutamine amidotransferase) binds and cleaves glutamine to supply the large subunit with the substrate ammonia.</text>
</comment>
<comment type="catalytic activity">
    <reaction evidence="1">
        <text>hydrogencarbonate + L-glutamine + 2 ATP + H2O = carbamoyl phosphate + L-glutamate + 2 ADP + phosphate + 2 H(+)</text>
        <dbReference type="Rhea" id="RHEA:18633"/>
        <dbReference type="ChEBI" id="CHEBI:15377"/>
        <dbReference type="ChEBI" id="CHEBI:15378"/>
        <dbReference type="ChEBI" id="CHEBI:17544"/>
        <dbReference type="ChEBI" id="CHEBI:29985"/>
        <dbReference type="ChEBI" id="CHEBI:30616"/>
        <dbReference type="ChEBI" id="CHEBI:43474"/>
        <dbReference type="ChEBI" id="CHEBI:58228"/>
        <dbReference type="ChEBI" id="CHEBI:58359"/>
        <dbReference type="ChEBI" id="CHEBI:456216"/>
        <dbReference type="EC" id="6.3.5.5"/>
    </reaction>
</comment>
<comment type="catalytic activity">
    <molecule>Carbamoyl phosphate synthase small chain</molecule>
    <reaction evidence="1">
        <text>L-glutamine + H2O = L-glutamate + NH4(+)</text>
        <dbReference type="Rhea" id="RHEA:15889"/>
        <dbReference type="ChEBI" id="CHEBI:15377"/>
        <dbReference type="ChEBI" id="CHEBI:28938"/>
        <dbReference type="ChEBI" id="CHEBI:29985"/>
        <dbReference type="ChEBI" id="CHEBI:58359"/>
    </reaction>
</comment>
<comment type="pathway">
    <text evidence="1">Amino-acid biosynthesis; L-arginine biosynthesis; carbamoyl phosphate from bicarbonate: step 1/1.</text>
</comment>
<comment type="pathway">
    <text evidence="1">Pyrimidine metabolism; UMP biosynthesis via de novo pathway; (S)-dihydroorotate from bicarbonate: step 1/3.</text>
</comment>
<comment type="subunit">
    <text evidence="1">Composed of two chains; the small (or glutamine) chain promotes the hydrolysis of glutamine to ammonia, which is used by the large (or ammonia) chain to synthesize carbamoyl phosphate. Tetramer of heterodimers (alpha,beta)4.</text>
</comment>
<comment type="similarity">
    <text evidence="1">Belongs to the CarA family.</text>
</comment>
<dbReference type="EC" id="6.3.5.5" evidence="1"/>
<dbReference type="EMBL" id="AE015451">
    <property type="protein sequence ID" value="AAN70296.1"/>
    <property type="molecule type" value="Genomic_DNA"/>
</dbReference>
<dbReference type="RefSeq" id="NP_746832.1">
    <property type="nucleotide sequence ID" value="NC_002947.4"/>
</dbReference>
<dbReference type="RefSeq" id="WP_010955364.1">
    <property type="nucleotide sequence ID" value="NZ_CP169744.1"/>
</dbReference>
<dbReference type="SMR" id="Q88DU5"/>
<dbReference type="STRING" id="160488.PP_4724"/>
<dbReference type="PaxDb" id="160488-PP_4724"/>
<dbReference type="GeneID" id="83682441"/>
<dbReference type="KEGG" id="ppu:PP_4724"/>
<dbReference type="PATRIC" id="fig|160488.4.peg.5035"/>
<dbReference type="eggNOG" id="COG0505">
    <property type="taxonomic scope" value="Bacteria"/>
</dbReference>
<dbReference type="HOGENOM" id="CLU_035901_1_1_6"/>
<dbReference type="OrthoDB" id="9804328at2"/>
<dbReference type="PhylomeDB" id="Q88DU5"/>
<dbReference type="BioCyc" id="PPUT160488:G1G01-5050-MONOMER"/>
<dbReference type="UniPathway" id="UPA00068">
    <property type="reaction ID" value="UER00171"/>
</dbReference>
<dbReference type="UniPathway" id="UPA00070">
    <property type="reaction ID" value="UER00115"/>
</dbReference>
<dbReference type="Proteomes" id="UP000000556">
    <property type="component" value="Chromosome"/>
</dbReference>
<dbReference type="GO" id="GO:0005524">
    <property type="term" value="F:ATP binding"/>
    <property type="evidence" value="ECO:0007669"/>
    <property type="project" value="UniProtKB-UniRule"/>
</dbReference>
<dbReference type="GO" id="GO:0004088">
    <property type="term" value="F:carbamoyl-phosphate synthase (glutamine-hydrolyzing) activity"/>
    <property type="evidence" value="ECO:0007669"/>
    <property type="project" value="UniProtKB-UniRule"/>
</dbReference>
<dbReference type="GO" id="GO:0004359">
    <property type="term" value="F:glutaminase activity"/>
    <property type="evidence" value="ECO:0007669"/>
    <property type="project" value="RHEA"/>
</dbReference>
<dbReference type="GO" id="GO:0006207">
    <property type="term" value="P:'de novo' pyrimidine nucleobase biosynthetic process"/>
    <property type="evidence" value="ECO:0007669"/>
    <property type="project" value="InterPro"/>
</dbReference>
<dbReference type="GO" id="GO:0044205">
    <property type="term" value="P:'de novo' UMP biosynthetic process"/>
    <property type="evidence" value="ECO:0007669"/>
    <property type="project" value="UniProtKB-UniRule"/>
</dbReference>
<dbReference type="GO" id="GO:0006541">
    <property type="term" value="P:glutamine metabolic process"/>
    <property type="evidence" value="ECO:0007669"/>
    <property type="project" value="InterPro"/>
</dbReference>
<dbReference type="GO" id="GO:0006526">
    <property type="term" value="P:L-arginine biosynthetic process"/>
    <property type="evidence" value="ECO:0007669"/>
    <property type="project" value="UniProtKB-UniRule"/>
</dbReference>
<dbReference type="CDD" id="cd01744">
    <property type="entry name" value="GATase1_CPSase"/>
    <property type="match status" value="1"/>
</dbReference>
<dbReference type="FunFam" id="3.40.50.880:FF:000011">
    <property type="entry name" value="Carbamoyl-phosphate synthase small chain"/>
    <property type="match status" value="1"/>
</dbReference>
<dbReference type="FunFam" id="3.50.30.20:FF:000001">
    <property type="entry name" value="Carbamoyl-phosphate synthase small chain"/>
    <property type="match status" value="1"/>
</dbReference>
<dbReference type="Gene3D" id="3.40.50.880">
    <property type="match status" value="1"/>
</dbReference>
<dbReference type="Gene3D" id="3.50.30.20">
    <property type="entry name" value="Carbamoyl-phosphate synthase small subunit, N-terminal domain"/>
    <property type="match status" value="1"/>
</dbReference>
<dbReference type="HAMAP" id="MF_01209">
    <property type="entry name" value="CPSase_S_chain"/>
    <property type="match status" value="1"/>
</dbReference>
<dbReference type="InterPro" id="IPR050472">
    <property type="entry name" value="Anth_synth/Amidotransfase"/>
</dbReference>
<dbReference type="InterPro" id="IPR006274">
    <property type="entry name" value="CarbamoylP_synth_ssu"/>
</dbReference>
<dbReference type="InterPro" id="IPR002474">
    <property type="entry name" value="CarbamoylP_synth_ssu_N"/>
</dbReference>
<dbReference type="InterPro" id="IPR036480">
    <property type="entry name" value="CarbP_synth_ssu_N_sf"/>
</dbReference>
<dbReference type="InterPro" id="IPR029062">
    <property type="entry name" value="Class_I_gatase-like"/>
</dbReference>
<dbReference type="InterPro" id="IPR035686">
    <property type="entry name" value="CPSase_GATase1"/>
</dbReference>
<dbReference type="InterPro" id="IPR017926">
    <property type="entry name" value="GATASE"/>
</dbReference>
<dbReference type="NCBIfam" id="TIGR01368">
    <property type="entry name" value="CPSaseIIsmall"/>
    <property type="match status" value="1"/>
</dbReference>
<dbReference type="NCBIfam" id="NF009475">
    <property type="entry name" value="PRK12838.1"/>
    <property type="match status" value="1"/>
</dbReference>
<dbReference type="PANTHER" id="PTHR43418:SF7">
    <property type="entry name" value="CARBAMOYL-PHOSPHATE SYNTHASE SMALL CHAIN"/>
    <property type="match status" value="1"/>
</dbReference>
<dbReference type="PANTHER" id="PTHR43418">
    <property type="entry name" value="MULTIFUNCTIONAL TRYPTOPHAN BIOSYNTHESIS PROTEIN-RELATED"/>
    <property type="match status" value="1"/>
</dbReference>
<dbReference type="Pfam" id="PF00988">
    <property type="entry name" value="CPSase_sm_chain"/>
    <property type="match status" value="1"/>
</dbReference>
<dbReference type="Pfam" id="PF00117">
    <property type="entry name" value="GATase"/>
    <property type="match status" value="1"/>
</dbReference>
<dbReference type="PRINTS" id="PR00099">
    <property type="entry name" value="CPSGATASE"/>
</dbReference>
<dbReference type="PRINTS" id="PR00096">
    <property type="entry name" value="GATASE"/>
</dbReference>
<dbReference type="SMART" id="SM01097">
    <property type="entry name" value="CPSase_sm_chain"/>
    <property type="match status" value="1"/>
</dbReference>
<dbReference type="SUPFAM" id="SSF52021">
    <property type="entry name" value="Carbamoyl phosphate synthetase, small subunit N-terminal domain"/>
    <property type="match status" value="1"/>
</dbReference>
<dbReference type="SUPFAM" id="SSF52317">
    <property type="entry name" value="Class I glutamine amidotransferase-like"/>
    <property type="match status" value="1"/>
</dbReference>
<dbReference type="PROSITE" id="PS51273">
    <property type="entry name" value="GATASE_TYPE_1"/>
    <property type="match status" value="1"/>
</dbReference>
<keyword id="KW-0028">Amino-acid biosynthesis</keyword>
<keyword id="KW-0055">Arginine biosynthesis</keyword>
<keyword id="KW-0067">ATP-binding</keyword>
<keyword id="KW-0315">Glutamine amidotransferase</keyword>
<keyword id="KW-0436">Ligase</keyword>
<keyword id="KW-0547">Nucleotide-binding</keyword>
<keyword id="KW-0665">Pyrimidine biosynthesis</keyword>
<keyword id="KW-1185">Reference proteome</keyword>
<feature type="chain" id="PRO_0000112305" description="Carbamoyl phosphate synthase small chain">
    <location>
        <begin position="1"/>
        <end position="378"/>
    </location>
</feature>
<feature type="domain" description="Glutamine amidotransferase type-1" evidence="1">
    <location>
        <begin position="193"/>
        <end position="378"/>
    </location>
</feature>
<feature type="region of interest" description="CPSase" evidence="1">
    <location>
        <begin position="1"/>
        <end position="189"/>
    </location>
</feature>
<feature type="active site" description="Nucleophile" evidence="1">
    <location>
        <position position="269"/>
    </location>
</feature>
<feature type="active site" evidence="1">
    <location>
        <position position="353"/>
    </location>
</feature>
<feature type="active site" evidence="1">
    <location>
        <position position="355"/>
    </location>
</feature>
<feature type="binding site" evidence="1">
    <location>
        <position position="47"/>
    </location>
    <ligand>
        <name>L-glutamine</name>
        <dbReference type="ChEBI" id="CHEBI:58359"/>
    </ligand>
</feature>
<feature type="binding site" evidence="1">
    <location>
        <position position="241"/>
    </location>
    <ligand>
        <name>L-glutamine</name>
        <dbReference type="ChEBI" id="CHEBI:58359"/>
    </ligand>
</feature>
<feature type="binding site" evidence="1">
    <location>
        <position position="243"/>
    </location>
    <ligand>
        <name>L-glutamine</name>
        <dbReference type="ChEBI" id="CHEBI:58359"/>
    </ligand>
</feature>
<feature type="binding site" evidence="1">
    <location>
        <position position="270"/>
    </location>
    <ligand>
        <name>L-glutamine</name>
        <dbReference type="ChEBI" id="CHEBI:58359"/>
    </ligand>
</feature>
<feature type="binding site" evidence="1">
    <location>
        <position position="273"/>
    </location>
    <ligand>
        <name>L-glutamine</name>
        <dbReference type="ChEBI" id="CHEBI:58359"/>
    </ligand>
</feature>
<feature type="binding site" evidence="1">
    <location>
        <position position="311"/>
    </location>
    <ligand>
        <name>L-glutamine</name>
        <dbReference type="ChEBI" id="CHEBI:58359"/>
    </ligand>
</feature>
<feature type="binding site" evidence="1">
    <location>
        <position position="313"/>
    </location>
    <ligand>
        <name>L-glutamine</name>
        <dbReference type="ChEBI" id="CHEBI:58359"/>
    </ligand>
</feature>
<feature type="binding site" evidence="1">
    <location>
        <position position="314"/>
    </location>
    <ligand>
        <name>L-glutamine</name>
        <dbReference type="ChEBI" id="CHEBI:58359"/>
    </ligand>
</feature>
<evidence type="ECO:0000255" key="1">
    <source>
        <dbReference type="HAMAP-Rule" id="MF_01209"/>
    </source>
</evidence>
<organism>
    <name type="scientific">Pseudomonas putida (strain ATCC 47054 / DSM 6125 / CFBP 8728 / NCIMB 11950 / KT2440)</name>
    <dbReference type="NCBI Taxonomy" id="160488"/>
    <lineage>
        <taxon>Bacteria</taxon>
        <taxon>Pseudomonadati</taxon>
        <taxon>Pseudomonadota</taxon>
        <taxon>Gammaproteobacteria</taxon>
        <taxon>Pseudomonadales</taxon>
        <taxon>Pseudomonadaceae</taxon>
        <taxon>Pseudomonas</taxon>
    </lineage>
</organism>
<proteinExistence type="inferred from homology"/>
<gene>
    <name evidence="1" type="primary">carA</name>
    <name type="ordered locus">PP_4724</name>
</gene>
<accession>Q88DU5</accession>
<sequence length="378" mass="40574">MTKPAILALADGSIFRGEAIGADGQTVGEVVFNTAMTGYQEILTDPSYAQQIVTLTYPHIGNTGTTPEDAESSRVWSAGLVIRDLPLLASNWRNTQSLPEYLKANNVVAIAGIDTRRLTRILREKGAQNGCILAGDNISEEAAIAAARGFPGLKGMDLAKVVSTKERYEWRSSVWELKTDSHPTIDAADLPYHVVAFDYGVKLNILRMLVARGCRVTVVPAQTPASEVLALNPDGVFLSNGPGDPEPCDYAIQAIKEILETEIPVFGICLGHQLLALASGAKTVKMGHGHHGANHPVQDLDTGVVMITSQNHGFAVDEATLPGNVRAIHKSLFDGTLQGIERTDKSAFSFQGHPEASPGPTDVAPLFDRFTDAMAKRR</sequence>
<reference key="1">
    <citation type="journal article" date="2002" name="Environ. Microbiol.">
        <title>Complete genome sequence and comparative analysis of the metabolically versatile Pseudomonas putida KT2440.</title>
        <authorList>
            <person name="Nelson K.E."/>
            <person name="Weinel C."/>
            <person name="Paulsen I.T."/>
            <person name="Dodson R.J."/>
            <person name="Hilbert H."/>
            <person name="Martins dos Santos V.A.P."/>
            <person name="Fouts D.E."/>
            <person name="Gill S.R."/>
            <person name="Pop M."/>
            <person name="Holmes M."/>
            <person name="Brinkac L.M."/>
            <person name="Beanan M.J."/>
            <person name="DeBoy R.T."/>
            <person name="Daugherty S.C."/>
            <person name="Kolonay J.F."/>
            <person name="Madupu R."/>
            <person name="Nelson W.C."/>
            <person name="White O."/>
            <person name="Peterson J.D."/>
            <person name="Khouri H.M."/>
            <person name="Hance I."/>
            <person name="Chris Lee P."/>
            <person name="Holtzapple E.K."/>
            <person name="Scanlan D."/>
            <person name="Tran K."/>
            <person name="Moazzez A."/>
            <person name="Utterback T.R."/>
            <person name="Rizzo M."/>
            <person name="Lee K."/>
            <person name="Kosack D."/>
            <person name="Moestl D."/>
            <person name="Wedler H."/>
            <person name="Lauber J."/>
            <person name="Stjepandic D."/>
            <person name="Hoheisel J."/>
            <person name="Straetz M."/>
            <person name="Heim S."/>
            <person name="Kiewitz C."/>
            <person name="Eisen J.A."/>
            <person name="Timmis K.N."/>
            <person name="Duesterhoeft A."/>
            <person name="Tuemmler B."/>
            <person name="Fraser C.M."/>
        </authorList>
    </citation>
    <scope>NUCLEOTIDE SEQUENCE [LARGE SCALE GENOMIC DNA]</scope>
    <source>
        <strain>ATCC 47054 / DSM 6125 / CFBP 8728 / NCIMB 11950 / KT2440</strain>
    </source>
</reference>
<protein>
    <recommendedName>
        <fullName evidence="1">Carbamoyl phosphate synthase small chain</fullName>
        <ecNumber evidence="1">6.3.5.5</ecNumber>
    </recommendedName>
    <alternativeName>
        <fullName evidence="1">Carbamoyl phosphate synthetase glutamine chain</fullName>
    </alternativeName>
</protein>